<keyword id="KW-0998">Cell outer membrane</keyword>
<keyword id="KW-1015">Disulfide bond</keyword>
<keyword id="KW-1029">Fimbrium biogenesis</keyword>
<keyword id="KW-0472">Membrane</keyword>
<keyword id="KW-1185">Reference proteome</keyword>
<keyword id="KW-0732">Signal</keyword>
<keyword id="KW-0812">Transmembrane</keyword>
<keyword id="KW-1134">Transmembrane beta strand</keyword>
<keyword id="KW-0813">Transport</keyword>
<reference key="1">
    <citation type="journal article" date="1992" name="Mol. Microbiol.">
        <title>Characterization of a Bordetella pertussis fimbrial gene cluster which is located directly downstream of the filamentous haemagglutinin gene.</title>
        <authorList>
            <person name="Willems R.J.L."/>
            <person name="van der Heide H.G.J."/>
            <person name="Mooi F.R."/>
        </authorList>
    </citation>
    <scope>NUCLEOTIDE SEQUENCE [GENOMIC DNA]</scope>
    <source>
        <strain>Wellcome 28</strain>
    </source>
</reference>
<reference key="2">
    <citation type="journal article" date="1992" name="EMBO J.">
        <title>Common accessory genes for the Bordetella pertussis filamentous hemagglutinin and fimbriae share sequence similarities with the papC and papD gene families.</title>
        <authorList>
            <person name="Locht C."/>
            <person name="Geoffroy M.C."/>
            <person name="Renauld G."/>
        </authorList>
    </citation>
    <scope>NUCLEOTIDE SEQUENCE [GENOMIC DNA]</scope>
    <source>
        <strain>Tohama I / ATCC BAA-589 / NCTC 13251</strain>
    </source>
</reference>
<reference key="3">
    <citation type="journal article" date="2003" name="Nat. Genet.">
        <title>Comparative analysis of the genome sequences of Bordetella pertussis, Bordetella parapertussis and Bordetella bronchiseptica.</title>
        <authorList>
            <person name="Parkhill J."/>
            <person name="Sebaihia M."/>
            <person name="Preston A."/>
            <person name="Murphy L.D."/>
            <person name="Thomson N.R."/>
            <person name="Harris D.E."/>
            <person name="Holden M.T.G."/>
            <person name="Churcher C.M."/>
            <person name="Bentley S.D."/>
            <person name="Mungall K.L."/>
            <person name="Cerdeno-Tarraga A.-M."/>
            <person name="Temple L."/>
            <person name="James K.D."/>
            <person name="Harris B."/>
            <person name="Quail M.A."/>
            <person name="Achtman M."/>
            <person name="Atkin R."/>
            <person name="Baker S."/>
            <person name="Basham D."/>
            <person name="Bason N."/>
            <person name="Cherevach I."/>
            <person name="Chillingworth T."/>
            <person name="Collins M."/>
            <person name="Cronin A."/>
            <person name="Davis P."/>
            <person name="Doggett J."/>
            <person name="Feltwell T."/>
            <person name="Goble A."/>
            <person name="Hamlin N."/>
            <person name="Hauser H."/>
            <person name="Holroyd S."/>
            <person name="Jagels K."/>
            <person name="Leather S."/>
            <person name="Moule S."/>
            <person name="Norberczak H."/>
            <person name="O'Neil S."/>
            <person name="Ormond D."/>
            <person name="Price C."/>
            <person name="Rabbinowitsch E."/>
            <person name="Rutter S."/>
            <person name="Sanders M."/>
            <person name="Saunders D."/>
            <person name="Seeger K."/>
            <person name="Sharp S."/>
            <person name="Simmonds M."/>
            <person name="Skelton J."/>
            <person name="Squares R."/>
            <person name="Squares S."/>
            <person name="Stevens K."/>
            <person name="Unwin L."/>
            <person name="Whitehead S."/>
            <person name="Barrell B.G."/>
            <person name="Maskell D.J."/>
        </authorList>
    </citation>
    <scope>NUCLEOTIDE SEQUENCE [LARGE SCALE GENOMIC DNA]</scope>
    <source>
        <strain>Tohama I / ATCC BAA-589 / NCTC 13251</strain>
    </source>
</reference>
<proteinExistence type="inferred from homology"/>
<accession>P33410</accession>
<comment type="function">
    <text>Probable porin-like protein necessary for the assembly of a pilin-type protein.</text>
</comment>
<comment type="subcellular location">
    <subcellularLocation>
        <location evidence="1">Cell outer membrane</location>
        <topology evidence="1">Multi-pass membrane protein</topology>
    </subcellularLocation>
</comment>
<comment type="similarity">
    <text evidence="3">Belongs to the fimbrial export usher family.</text>
</comment>
<protein>
    <recommendedName>
        <fullName>Outer membrane usher protein FimC</fullName>
    </recommendedName>
</protein>
<gene>
    <name type="primary">fimC</name>
    <name type="synonym">fhaA</name>
    <name type="ordered locus">BP1882</name>
</gene>
<organism>
    <name type="scientific">Bordetella pertussis (strain Tohama I / ATCC BAA-589 / NCTC 13251)</name>
    <dbReference type="NCBI Taxonomy" id="257313"/>
    <lineage>
        <taxon>Bacteria</taxon>
        <taxon>Pseudomonadati</taxon>
        <taxon>Pseudomonadota</taxon>
        <taxon>Betaproteobacteria</taxon>
        <taxon>Burkholderiales</taxon>
        <taxon>Alcaligenaceae</taxon>
        <taxon>Bordetella</taxon>
    </lineage>
</organism>
<name>FIMC_BORPE</name>
<dbReference type="EMBL" id="X64876">
    <property type="protein sequence ID" value="CAA46090.1"/>
    <property type="molecule type" value="Genomic_DNA"/>
</dbReference>
<dbReference type="EMBL" id="X66729">
    <property type="protein sequence ID" value="CAA47266.1"/>
    <property type="molecule type" value="Genomic_DNA"/>
</dbReference>
<dbReference type="EMBL" id="BX640416">
    <property type="protein sequence ID" value="CAE42165.1"/>
    <property type="molecule type" value="Genomic_DNA"/>
</dbReference>
<dbReference type="PIR" id="S25193">
    <property type="entry name" value="S25193"/>
</dbReference>
<dbReference type="RefSeq" id="NP_880573.1">
    <property type="nucleotide sequence ID" value="NC_002929.2"/>
</dbReference>
<dbReference type="RefSeq" id="WP_010930612.1">
    <property type="nucleotide sequence ID" value="NZ_CP039022.1"/>
</dbReference>
<dbReference type="SMR" id="P33410"/>
<dbReference type="STRING" id="257313.BP1882"/>
<dbReference type="TCDB" id="1.B.11.3.1">
    <property type="family name" value="the outer membrane fimbrial usher porin (fup) family"/>
</dbReference>
<dbReference type="PaxDb" id="257313-BP1882"/>
<dbReference type="KEGG" id="bpe:BP1882"/>
<dbReference type="PATRIC" id="fig|257313.5.peg.2020"/>
<dbReference type="eggNOG" id="COG3188">
    <property type="taxonomic scope" value="Bacteria"/>
</dbReference>
<dbReference type="HOGENOM" id="CLU_009120_1_0_4"/>
<dbReference type="Proteomes" id="UP000002676">
    <property type="component" value="Chromosome"/>
</dbReference>
<dbReference type="GO" id="GO:0009279">
    <property type="term" value="C:cell outer membrane"/>
    <property type="evidence" value="ECO:0007669"/>
    <property type="project" value="UniProtKB-SubCell"/>
</dbReference>
<dbReference type="GO" id="GO:0015473">
    <property type="term" value="F:fimbrial usher porin activity"/>
    <property type="evidence" value="ECO:0007669"/>
    <property type="project" value="InterPro"/>
</dbReference>
<dbReference type="GO" id="GO:0009297">
    <property type="term" value="P:pilus assembly"/>
    <property type="evidence" value="ECO:0007669"/>
    <property type="project" value="InterPro"/>
</dbReference>
<dbReference type="Gene3D" id="2.60.40.2070">
    <property type="match status" value="1"/>
</dbReference>
<dbReference type="Gene3D" id="2.60.40.3110">
    <property type="match status" value="1"/>
</dbReference>
<dbReference type="Gene3D" id="3.10.20.410">
    <property type="match status" value="1"/>
</dbReference>
<dbReference type="Gene3D" id="2.60.40.2610">
    <property type="entry name" value="Outer membrane usher protein FimD, plug domain"/>
    <property type="match status" value="1"/>
</dbReference>
<dbReference type="InterPro" id="IPR000015">
    <property type="entry name" value="Fimb_usher"/>
</dbReference>
<dbReference type="InterPro" id="IPR018030">
    <property type="entry name" value="Fimbrial_membr_usher_CS"/>
</dbReference>
<dbReference type="InterPro" id="IPR042186">
    <property type="entry name" value="FimD_plug_dom"/>
</dbReference>
<dbReference type="InterPro" id="IPR025949">
    <property type="entry name" value="PapC-like_C"/>
</dbReference>
<dbReference type="InterPro" id="IPR043142">
    <property type="entry name" value="PapC-like_C_sf"/>
</dbReference>
<dbReference type="InterPro" id="IPR025885">
    <property type="entry name" value="PapC_N"/>
</dbReference>
<dbReference type="InterPro" id="IPR037224">
    <property type="entry name" value="PapC_N_sf"/>
</dbReference>
<dbReference type="PANTHER" id="PTHR30451">
    <property type="entry name" value="OUTER MEMBRANE USHER PROTEIN"/>
    <property type="match status" value="1"/>
</dbReference>
<dbReference type="PANTHER" id="PTHR30451:SF5">
    <property type="entry name" value="SLR0019 PROTEIN"/>
    <property type="match status" value="1"/>
</dbReference>
<dbReference type="Pfam" id="PF13953">
    <property type="entry name" value="PapC_C"/>
    <property type="match status" value="1"/>
</dbReference>
<dbReference type="Pfam" id="PF13954">
    <property type="entry name" value="PapC_N"/>
    <property type="match status" value="1"/>
</dbReference>
<dbReference type="Pfam" id="PF00577">
    <property type="entry name" value="Usher"/>
    <property type="match status" value="1"/>
</dbReference>
<dbReference type="SUPFAM" id="SSF141729">
    <property type="entry name" value="FimD N-terminal domain-like"/>
    <property type="match status" value="1"/>
</dbReference>
<dbReference type="PROSITE" id="PS01151">
    <property type="entry name" value="FIMBRIAL_USHER"/>
    <property type="match status" value="1"/>
</dbReference>
<feature type="signal peptide" evidence="2">
    <location>
        <begin position="1"/>
        <end position="15"/>
    </location>
</feature>
<feature type="chain" id="PRO_0000009311" description="Outer membrane usher protein FimC">
    <location>
        <begin position="16"/>
        <end position="873"/>
    </location>
</feature>
<feature type="disulfide bond" evidence="2">
    <location>
        <begin position="815"/>
        <end position="838"/>
    </location>
</feature>
<feature type="sequence conflict" description="In Ref. 2; CAA47266." evidence="3" ref="2">
    <original>G</original>
    <variation>A</variation>
    <location>
        <position position="744"/>
    </location>
</feature>
<evidence type="ECO:0000250" key="1"/>
<evidence type="ECO:0000255" key="2"/>
<evidence type="ECO:0000305" key="3"/>
<sequence>MKQIPLILAMSLAFAAAAKGESAPDMQAAVNFDSAMLWGGANGADLSRFNYSNALRPGNYIVDIYANNYPLIRQQVRFVAAQTSGQGLKTAPAVACFTYGQLEAMQVRLRALDPALVADLKSSGRCEVLGKLFPDSRESFDFGENRLEVSIPQAYTINRFRRDISPDEWDSGITAFRLGYQYNYADYIGGLRAGRRLDLNLYSGFNFKGWYLRNSSTLGWGQGRFTRRSQRTSLQTDIPSWRARLVFGDVFSSGEYFAPYSMRGMLVGSDTAMLPYSERLYRPTIRGVARTRANVKVYQAGVLVFQDAVPPGPFAIDDYSPASYGGDLRVVVTEANGAVQTFTVPYASAVRLILPGQTQWSFSAGRYRNYRNDGQDRPWVTQLTGRHGVADGVNLYGGLLIAQAYQAGLAGLSWNTPWGAMAADATLSRSQLSTTGNANGSSLRFSYSKTLSGTNTAIRLATLRYSSSGFWNFADAVNAGPVETNGRNGRFGLYSLLGRERPRGDFSVTLSQPLGGYGSLYVSALRRTYWGSSRVDQQTQLGYSTQVGRVGVNLDVSRTENRRSTEHQVMLNLSIPLYGATSSGVVTGSLARTGSAPVQQSVNYSGMSGERDQYTYGLGVQRAGTSAQYALNGSWSGTYGEVSGQLTHGRSYSQYQINGSGGLVAHAGGVTFGQYQAGTIGLIQAEAAAGAKVVNTRNAAVDRSGYGLVSLTPYSLNEVELSPQDLPLDVQLESTVEQVIPRAGAVVALRFPTRHDVAAMLVAEPGSEGALVFGTEVRDGAGKVVGVAGQGASALVRGVSASGTLEVTRADGSICRATYDLKSAGQAVHGLPRIALACAPQGGGERGARAAGQAVAQPSAISISGKDHEPDIR</sequence>